<sequence>MTHETTTLISLKEAMKRVDNKLRALDTQFKELDVTKDNLTLRFEHHSKTLASQAAQDEIWTAALALGFTSMELNIVYSYVIEVLICLHTRMLQKLPDLVRSLPTLASVLRRKAKNKHVRLVWESVLQEYGLQERDVSALCTFFIVHGNKGEHYAANVRRMYIKDVSFMITNMVKNQALQDGLLRAVQIIEKGKQAQDPENSRAPLKELMPPVKD</sequence>
<feature type="chain" id="PRO_0000269484" description="Single-pass membrane and coiled-coil domain-containing protein 1">
    <location>
        <begin position="1"/>
        <end position="214"/>
    </location>
</feature>
<feature type="transmembrane region" description="Helical" evidence="1">
    <location>
        <begin position="59"/>
        <end position="81"/>
    </location>
</feature>
<feature type="region of interest" description="Disordered" evidence="2">
    <location>
        <begin position="193"/>
        <end position="214"/>
    </location>
</feature>
<feature type="coiled-coil region" evidence="1">
    <location>
        <begin position="5"/>
        <end position="40"/>
    </location>
</feature>
<feature type="splice variant" id="VSP_046481" description="In isoform 2." evidence="3 4">
    <location>
        <begin position="1"/>
        <end position="70"/>
    </location>
</feature>
<dbReference type="EMBL" id="AK009281">
    <property type="protein sequence ID" value="BAC25250.1"/>
    <property type="molecule type" value="mRNA"/>
</dbReference>
<dbReference type="EMBL" id="AC126265">
    <property type="status" value="NOT_ANNOTATED_CDS"/>
    <property type="molecule type" value="Genomic_DNA"/>
</dbReference>
<dbReference type="EMBL" id="BC125555">
    <property type="protein sequence ID" value="AAI25556.1"/>
    <property type="molecule type" value="mRNA"/>
</dbReference>
<dbReference type="EMBL" id="BC131954">
    <property type="protein sequence ID" value="AAI31955.1"/>
    <property type="status" value="ALT_INIT"/>
    <property type="molecule type" value="mRNA"/>
</dbReference>
<dbReference type="CCDS" id="CCDS28119.2">
    <molecule id="Q8CEZ1-1"/>
</dbReference>
<dbReference type="RefSeq" id="NP_899106.2">
    <molecule id="Q8CEZ1-1"/>
    <property type="nucleotide sequence ID" value="NM_183283.3"/>
</dbReference>
<dbReference type="SMR" id="Q8CEZ1"/>
<dbReference type="BioGRID" id="213543">
    <property type="interactions" value="1"/>
</dbReference>
<dbReference type="FunCoup" id="Q8CEZ1">
    <property type="interactions" value="3"/>
</dbReference>
<dbReference type="STRING" id="10090.ENSMUSP00000090873"/>
<dbReference type="iPTMnet" id="Q8CEZ1"/>
<dbReference type="PhosphoSitePlus" id="Q8CEZ1"/>
<dbReference type="PaxDb" id="10090-ENSMUSP00000090873"/>
<dbReference type="ProteomicsDB" id="261432">
    <molecule id="Q8CEZ1-1"/>
</dbReference>
<dbReference type="ProteomicsDB" id="261433">
    <molecule id="Q8CEZ1-2"/>
</dbReference>
<dbReference type="Antibodypedia" id="68999">
    <property type="antibodies" value="71 antibodies from 13 providers"/>
</dbReference>
<dbReference type="Ensembl" id="ENSMUST00000093183.5">
    <molecule id="Q8CEZ1-1"/>
    <property type="protein sequence ID" value="ENSMUSP00000090873.4"/>
    <property type="gene ID" value="ENSMUSG00000046345.6"/>
</dbReference>
<dbReference type="GeneID" id="69576"/>
<dbReference type="KEGG" id="mmu:69576"/>
<dbReference type="UCSC" id="uc007yyn.2">
    <molecule id="Q8CEZ1-1"/>
    <property type="organism name" value="mouse"/>
</dbReference>
<dbReference type="AGR" id="MGI:1916826"/>
<dbReference type="CTD" id="255798"/>
<dbReference type="MGI" id="MGI:1916826">
    <property type="gene designation" value="Smco1"/>
</dbReference>
<dbReference type="VEuPathDB" id="HostDB:ENSMUSG00000046345"/>
<dbReference type="eggNOG" id="ENOG502S2Q0">
    <property type="taxonomic scope" value="Eukaryota"/>
</dbReference>
<dbReference type="GeneTree" id="ENSGT00390000010564"/>
<dbReference type="HOGENOM" id="CLU_112082_0_0_1"/>
<dbReference type="InParanoid" id="Q8CEZ1"/>
<dbReference type="OMA" id="FMITNMV"/>
<dbReference type="OrthoDB" id="9882837at2759"/>
<dbReference type="PhylomeDB" id="Q8CEZ1"/>
<dbReference type="TreeFam" id="TF337928"/>
<dbReference type="BioGRID-ORCS" id="69576">
    <property type="hits" value="2 hits in 78 CRISPR screens"/>
</dbReference>
<dbReference type="PRO" id="PR:Q8CEZ1"/>
<dbReference type="Proteomes" id="UP000000589">
    <property type="component" value="Chromosome 16"/>
</dbReference>
<dbReference type="RNAct" id="Q8CEZ1">
    <property type="molecule type" value="protein"/>
</dbReference>
<dbReference type="Bgee" id="ENSMUSG00000046345">
    <property type="expression patterns" value="Expressed in digastric muscle group and 23 other cell types or tissues"/>
</dbReference>
<dbReference type="GO" id="GO:0016020">
    <property type="term" value="C:membrane"/>
    <property type="evidence" value="ECO:0007669"/>
    <property type="project" value="UniProtKB-SubCell"/>
</dbReference>
<dbReference type="InterPro" id="IPR027875">
    <property type="entry name" value="DUF4547"/>
</dbReference>
<dbReference type="PANTHER" id="PTHR35979">
    <property type="entry name" value="SINGLE-PASS MEMBRANE AND COILED-COIL DOMAIN-CONTAINING PROTEIN 1"/>
    <property type="match status" value="1"/>
</dbReference>
<dbReference type="PANTHER" id="PTHR35979:SF1">
    <property type="entry name" value="SINGLE-PASS MEMBRANE AND COILED-COIL DOMAIN-CONTAINING PROTEIN 1"/>
    <property type="match status" value="1"/>
</dbReference>
<dbReference type="Pfam" id="PF15080">
    <property type="entry name" value="DUF4547"/>
    <property type="match status" value="1"/>
</dbReference>
<name>SMCO1_MOUSE</name>
<gene>
    <name type="primary">Smco1</name>
</gene>
<accession>Q8CEZ1</accession>
<accession>A3KMI2</accession>
<accession>E9PUG1</accession>
<proteinExistence type="evidence at transcript level"/>
<evidence type="ECO:0000255" key="1"/>
<evidence type="ECO:0000256" key="2">
    <source>
        <dbReference type="SAM" id="MobiDB-lite"/>
    </source>
</evidence>
<evidence type="ECO:0000303" key="3">
    <source>
    </source>
</evidence>
<evidence type="ECO:0000303" key="4">
    <source>
    </source>
</evidence>
<evidence type="ECO:0000305" key="5"/>
<organism>
    <name type="scientific">Mus musculus</name>
    <name type="common">Mouse</name>
    <dbReference type="NCBI Taxonomy" id="10090"/>
    <lineage>
        <taxon>Eukaryota</taxon>
        <taxon>Metazoa</taxon>
        <taxon>Chordata</taxon>
        <taxon>Craniata</taxon>
        <taxon>Vertebrata</taxon>
        <taxon>Euteleostomi</taxon>
        <taxon>Mammalia</taxon>
        <taxon>Eutheria</taxon>
        <taxon>Euarchontoglires</taxon>
        <taxon>Glires</taxon>
        <taxon>Rodentia</taxon>
        <taxon>Myomorpha</taxon>
        <taxon>Muroidea</taxon>
        <taxon>Muridae</taxon>
        <taxon>Murinae</taxon>
        <taxon>Mus</taxon>
        <taxon>Mus</taxon>
    </lineage>
</organism>
<reference key="1">
    <citation type="journal article" date="2005" name="Science">
        <title>The transcriptional landscape of the mammalian genome.</title>
        <authorList>
            <person name="Carninci P."/>
            <person name="Kasukawa T."/>
            <person name="Katayama S."/>
            <person name="Gough J."/>
            <person name="Frith M.C."/>
            <person name="Maeda N."/>
            <person name="Oyama R."/>
            <person name="Ravasi T."/>
            <person name="Lenhard B."/>
            <person name="Wells C."/>
            <person name="Kodzius R."/>
            <person name="Shimokawa K."/>
            <person name="Bajic V.B."/>
            <person name="Brenner S.E."/>
            <person name="Batalov S."/>
            <person name="Forrest A.R."/>
            <person name="Zavolan M."/>
            <person name="Davis M.J."/>
            <person name="Wilming L.G."/>
            <person name="Aidinis V."/>
            <person name="Allen J.E."/>
            <person name="Ambesi-Impiombato A."/>
            <person name="Apweiler R."/>
            <person name="Aturaliya R.N."/>
            <person name="Bailey T.L."/>
            <person name="Bansal M."/>
            <person name="Baxter L."/>
            <person name="Beisel K.W."/>
            <person name="Bersano T."/>
            <person name="Bono H."/>
            <person name="Chalk A.M."/>
            <person name="Chiu K.P."/>
            <person name="Choudhary V."/>
            <person name="Christoffels A."/>
            <person name="Clutterbuck D.R."/>
            <person name="Crowe M.L."/>
            <person name="Dalla E."/>
            <person name="Dalrymple B.P."/>
            <person name="de Bono B."/>
            <person name="Della Gatta G."/>
            <person name="di Bernardo D."/>
            <person name="Down T."/>
            <person name="Engstrom P."/>
            <person name="Fagiolini M."/>
            <person name="Faulkner G."/>
            <person name="Fletcher C.F."/>
            <person name="Fukushima T."/>
            <person name="Furuno M."/>
            <person name="Futaki S."/>
            <person name="Gariboldi M."/>
            <person name="Georgii-Hemming P."/>
            <person name="Gingeras T.R."/>
            <person name="Gojobori T."/>
            <person name="Green R.E."/>
            <person name="Gustincich S."/>
            <person name="Harbers M."/>
            <person name="Hayashi Y."/>
            <person name="Hensch T.K."/>
            <person name="Hirokawa N."/>
            <person name="Hill D."/>
            <person name="Huminiecki L."/>
            <person name="Iacono M."/>
            <person name="Ikeo K."/>
            <person name="Iwama A."/>
            <person name="Ishikawa T."/>
            <person name="Jakt M."/>
            <person name="Kanapin A."/>
            <person name="Katoh M."/>
            <person name="Kawasawa Y."/>
            <person name="Kelso J."/>
            <person name="Kitamura H."/>
            <person name="Kitano H."/>
            <person name="Kollias G."/>
            <person name="Krishnan S.P."/>
            <person name="Kruger A."/>
            <person name="Kummerfeld S.K."/>
            <person name="Kurochkin I.V."/>
            <person name="Lareau L.F."/>
            <person name="Lazarevic D."/>
            <person name="Lipovich L."/>
            <person name="Liu J."/>
            <person name="Liuni S."/>
            <person name="McWilliam S."/>
            <person name="Madan Babu M."/>
            <person name="Madera M."/>
            <person name="Marchionni L."/>
            <person name="Matsuda H."/>
            <person name="Matsuzawa S."/>
            <person name="Miki H."/>
            <person name="Mignone F."/>
            <person name="Miyake S."/>
            <person name="Morris K."/>
            <person name="Mottagui-Tabar S."/>
            <person name="Mulder N."/>
            <person name="Nakano N."/>
            <person name="Nakauchi H."/>
            <person name="Ng P."/>
            <person name="Nilsson R."/>
            <person name="Nishiguchi S."/>
            <person name="Nishikawa S."/>
            <person name="Nori F."/>
            <person name="Ohara O."/>
            <person name="Okazaki Y."/>
            <person name="Orlando V."/>
            <person name="Pang K.C."/>
            <person name="Pavan W.J."/>
            <person name="Pavesi G."/>
            <person name="Pesole G."/>
            <person name="Petrovsky N."/>
            <person name="Piazza S."/>
            <person name="Reed J."/>
            <person name="Reid J.F."/>
            <person name="Ring B.Z."/>
            <person name="Ringwald M."/>
            <person name="Rost B."/>
            <person name="Ruan Y."/>
            <person name="Salzberg S.L."/>
            <person name="Sandelin A."/>
            <person name="Schneider C."/>
            <person name="Schoenbach C."/>
            <person name="Sekiguchi K."/>
            <person name="Semple C.A."/>
            <person name="Seno S."/>
            <person name="Sessa L."/>
            <person name="Sheng Y."/>
            <person name="Shibata Y."/>
            <person name="Shimada H."/>
            <person name="Shimada K."/>
            <person name="Silva D."/>
            <person name="Sinclair B."/>
            <person name="Sperling S."/>
            <person name="Stupka E."/>
            <person name="Sugiura K."/>
            <person name="Sultana R."/>
            <person name="Takenaka Y."/>
            <person name="Taki K."/>
            <person name="Tammoja K."/>
            <person name="Tan S.L."/>
            <person name="Tang S."/>
            <person name="Taylor M.S."/>
            <person name="Tegner J."/>
            <person name="Teichmann S.A."/>
            <person name="Ueda H.R."/>
            <person name="van Nimwegen E."/>
            <person name="Verardo R."/>
            <person name="Wei C.L."/>
            <person name="Yagi K."/>
            <person name="Yamanishi H."/>
            <person name="Zabarovsky E."/>
            <person name="Zhu S."/>
            <person name="Zimmer A."/>
            <person name="Hide W."/>
            <person name="Bult C."/>
            <person name="Grimmond S.M."/>
            <person name="Teasdale R.D."/>
            <person name="Liu E.T."/>
            <person name="Brusic V."/>
            <person name="Quackenbush J."/>
            <person name="Wahlestedt C."/>
            <person name="Mattick J.S."/>
            <person name="Hume D.A."/>
            <person name="Kai C."/>
            <person name="Sasaki D."/>
            <person name="Tomaru Y."/>
            <person name="Fukuda S."/>
            <person name="Kanamori-Katayama M."/>
            <person name="Suzuki M."/>
            <person name="Aoki J."/>
            <person name="Arakawa T."/>
            <person name="Iida J."/>
            <person name="Imamura K."/>
            <person name="Itoh M."/>
            <person name="Kato T."/>
            <person name="Kawaji H."/>
            <person name="Kawagashira N."/>
            <person name="Kawashima T."/>
            <person name="Kojima M."/>
            <person name="Kondo S."/>
            <person name="Konno H."/>
            <person name="Nakano K."/>
            <person name="Ninomiya N."/>
            <person name="Nishio T."/>
            <person name="Okada M."/>
            <person name="Plessy C."/>
            <person name="Shibata K."/>
            <person name="Shiraki T."/>
            <person name="Suzuki S."/>
            <person name="Tagami M."/>
            <person name="Waki K."/>
            <person name="Watahiki A."/>
            <person name="Okamura-Oho Y."/>
            <person name="Suzuki H."/>
            <person name="Kawai J."/>
            <person name="Hayashizaki Y."/>
        </authorList>
    </citation>
    <scope>NUCLEOTIDE SEQUENCE [LARGE SCALE MRNA] (ISOFORM 2)</scope>
    <source>
        <strain>C57BL/6J</strain>
        <tissue>Tongue</tissue>
    </source>
</reference>
<reference key="2">
    <citation type="journal article" date="2009" name="PLoS Biol.">
        <title>Lineage-specific biology revealed by a finished genome assembly of the mouse.</title>
        <authorList>
            <person name="Church D.M."/>
            <person name="Goodstadt L."/>
            <person name="Hillier L.W."/>
            <person name="Zody M.C."/>
            <person name="Goldstein S."/>
            <person name="She X."/>
            <person name="Bult C.J."/>
            <person name="Agarwala R."/>
            <person name="Cherry J.L."/>
            <person name="DiCuccio M."/>
            <person name="Hlavina W."/>
            <person name="Kapustin Y."/>
            <person name="Meric P."/>
            <person name="Maglott D."/>
            <person name="Birtle Z."/>
            <person name="Marques A.C."/>
            <person name="Graves T."/>
            <person name="Zhou S."/>
            <person name="Teague B."/>
            <person name="Potamousis K."/>
            <person name="Churas C."/>
            <person name="Place M."/>
            <person name="Herschleb J."/>
            <person name="Runnheim R."/>
            <person name="Forrest D."/>
            <person name="Amos-Landgraf J."/>
            <person name="Schwartz D.C."/>
            <person name="Cheng Z."/>
            <person name="Lindblad-Toh K."/>
            <person name="Eichler E.E."/>
            <person name="Ponting C.P."/>
        </authorList>
    </citation>
    <scope>NUCLEOTIDE SEQUENCE [LARGE SCALE GENOMIC DNA]</scope>
    <source>
        <strain>C57BL/6J</strain>
    </source>
</reference>
<reference key="3">
    <citation type="journal article" date="2004" name="Genome Res.">
        <title>The status, quality, and expansion of the NIH full-length cDNA project: the Mammalian Gene Collection (MGC).</title>
        <authorList>
            <consortium name="The MGC Project Team"/>
        </authorList>
    </citation>
    <scope>NUCLEOTIDE SEQUENCE [LARGE SCALE MRNA] (ISOFORM 2)</scope>
    <source>
        <tissue>Brain</tissue>
    </source>
</reference>
<comment type="subcellular location">
    <subcellularLocation>
        <location evidence="5">Membrane</location>
        <topology evidence="5">Single-pass membrane protein</topology>
    </subcellularLocation>
</comment>
<comment type="alternative products">
    <event type="alternative splicing"/>
    <isoform>
        <id>Q8CEZ1-1</id>
        <name>1</name>
        <sequence type="displayed"/>
    </isoform>
    <isoform>
        <id>Q8CEZ1-2</id>
        <name>2</name>
        <sequence type="described" ref="VSP_046481"/>
    </isoform>
</comment>
<comment type="sequence caution" evidence="5">
    <conflict type="erroneous initiation">
        <sequence resource="EMBL-CDS" id="AAI31955"/>
    </conflict>
    <text>Extended N-terminus.</text>
</comment>
<protein>
    <recommendedName>
        <fullName>Single-pass membrane and coiled-coil domain-containing protein 1</fullName>
    </recommendedName>
    <alternativeName>
        <fullName>Single-pass membrane protein with coiled-coil domains 1</fullName>
    </alternativeName>
</protein>
<keyword id="KW-0025">Alternative splicing</keyword>
<keyword id="KW-0175">Coiled coil</keyword>
<keyword id="KW-0472">Membrane</keyword>
<keyword id="KW-1185">Reference proteome</keyword>
<keyword id="KW-0812">Transmembrane</keyword>
<keyword id="KW-1133">Transmembrane helix</keyword>